<organism>
    <name type="scientific">Pseudomonas aeruginosa (strain ATCC 15692 / DSM 22644 / CIP 104116 / JCM 14847 / LMG 12228 / 1C / PRS 101 / PAO1)</name>
    <dbReference type="NCBI Taxonomy" id="208964"/>
    <lineage>
        <taxon>Bacteria</taxon>
        <taxon>Pseudomonadati</taxon>
        <taxon>Pseudomonadota</taxon>
        <taxon>Gammaproteobacteria</taxon>
        <taxon>Pseudomonadales</taxon>
        <taxon>Pseudomonadaceae</taxon>
        <taxon>Pseudomonas</taxon>
    </lineage>
</organism>
<dbReference type="EC" id="1.14.12.17" evidence="1"/>
<dbReference type="EMBL" id="AE004091">
    <property type="protein sequence ID" value="AAG06052.1"/>
    <property type="molecule type" value="Genomic_DNA"/>
</dbReference>
<dbReference type="PIR" id="F83311">
    <property type="entry name" value="F83311"/>
</dbReference>
<dbReference type="RefSeq" id="NP_251354.1">
    <property type="nucleotide sequence ID" value="NC_002516.2"/>
</dbReference>
<dbReference type="SMR" id="Q9I0H4"/>
<dbReference type="FunCoup" id="Q9I0H4">
    <property type="interactions" value="209"/>
</dbReference>
<dbReference type="STRING" id="208964.PA2664"/>
<dbReference type="PaxDb" id="208964-PA2664"/>
<dbReference type="DNASU" id="882373"/>
<dbReference type="GeneID" id="882373"/>
<dbReference type="KEGG" id="pae:PA2664"/>
<dbReference type="PATRIC" id="fig|208964.12.peg.2788"/>
<dbReference type="PseudoCAP" id="PA2664"/>
<dbReference type="HOGENOM" id="CLU_003827_12_0_6"/>
<dbReference type="InParanoid" id="Q9I0H4"/>
<dbReference type="OrthoDB" id="9801223at2"/>
<dbReference type="PhylomeDB" id="Q9I0H4"/>
<dbReference type="BioCyc" id="PAER208964:G1FZ6-2704-MONOMER"/>
<dbReference type="Proteomes" id="UP000002438">
    <property type="component" value="Chromosome"/>
</dbReference>
<dbReference type="GO" id="GO:0005737">
    <property type="term" value="C:cytoplasm"/>
    <property type="evidence" value="ECO:0000318"/>
    <property type="project" value="GO_Central"/>
</dbReference>
<dbReference type="GO" id="GO:0071949">
    <property type="term" value="F:FAD binding"/>
    <property type="evidence" value="ECO:0000318"/>
    <property type="project" value="GO_Central"/>
</dbReference>
<dbReference type="GO" id="GO:0020037">
    <property type="term" value="F:heme binding"/>
    <property type="evidence" value="ECO:0007669"/>
    <property type="project" value="InterPro"/>
</dbReference>
<dbReference type="GO" id="GO:0046872">
    <property type="term" value="F:metal ion binding"/>
    <property type="evidence" value="ECO:0007669"/>
    <property type="project" value="UniProtKB-KW"/>
</dbReference>
<dbReference type="GO" id="GO:0008941">
    <property type="term" value="F:nitric oxide dioxygenase NAD(P)H activity"/>
    <property type="evidence" value="ECO:0000318"/>
    <property type="project" value="GO_Central"/>
</dbReference>
<dbReference type="GO" id="GO:0019825">
    <property type="term" value="F:oxygen binding"/>
    <property type="evidence" value="ECO:0007669"/>
    <property type="project" value="InterPro"/>
</dbReference>
<dbReference type="GO" id="GO:0005344">
    <property type="term" value="F:oxygen carrier activity"/>
    <property type="evidence" value="ECO:0007669"/>
    <property type="project" value="UniProtKB-UniRule"/>
</dbReference>
<dbReference type="GO" id="GO:0071500">
    <property type="term" value="P:cellular response to nitrosative stress"/>
    <property type="evidence" value="ECO:0000318"/>
    <property type="project" value="GO_Central"/>
</dbReference>
<dbReference type="GO" id="GO:0046210">
    <property type="term" value="P:nitric oxide catabolic process"/>
    <property type="evidence" value="ECO:0000318"/>
    <property type="project" value="GO_Central"/>
</dbReference>
<dbReference type="GO" id="GO:0009636">
    <property type="term" value="P:response to toxic substance"/>
    <property type="evidence" value="ECO:0007669"/>
    <property type="project" value="UniProtKB-KW"/>
</dbReference>
<dbReference type="CDD" id="cd06184">
    <property type="entry name" value="flavohem_like_fad_nad_binding"/>
    <property type="match status" value="1"/>
</dbReference>
<dbReference type="CDD" id="cd14780">
    <property type="entry name" value="HmpPa-globin-like"/>
    <property type="match status" value="1"/>
</dbReference>
<dbReference type="FunFam" id="1.10.490.10:FF:000003">
    <property type="entry name" value="Flavohemoprotein"/>
    <property type="match status" value="1"/>
</dbReference>
<dbReference type="FunFam" id="2.40.30.10:FF:000034">
    <property type="entry name" value="Flavohemoprotein"/>
    <property type="match status" value="1"/>
</dbReference>
<dbReference type="FunFam" id="3.40.50.80:FF:000010">
    <property type="entry name" value="Flavohemoprotein"/>
    <property type="match status" value="1"/>
</dbReference>
<dbReference type="Gene3D" id="1.10.490.10">
    <property type="entry name" value="Globins"/>
    <property type="match status" value="1"/>
</dbReference>
<dbReference type="Gene3D" id="3.40.50.80">
    <property type="entry name" value="Nucleotide-binding domain of ferredoxin-NADP reductase (FNR) module"/>
    <property type="match status" value="1"/>
</dbReference>
<dbReference type="Gene3D" id="2.40.30.10">
    <property type="entry name" value="Translation factors"/>
    <property type="match status" value="1"/>
</dbReference>
<dbReference type="HAMAP" id="MF_01252">
    <property type="entry name" value="Hmp"/>
    <property type="match status" value="1"/>
</dbReference>
<dbReference type="InterPro" id="IPR008333">
    <property type="entry name" value="Cbr1-like_FAD-bd_dom"/>
</dbReference>
<dbReference type="InterPro" id="IPR017927">
    <property type="entry name" value="FAD-bd_FR_type"/>
</dbReference>
<dbReference type="InterPro" id="IPR039261">
    <property type="entry name" value="FNR_nucleotide-bd"/>
</dbReference>
<dbReference type="InterPro" id="IPR000971">
    <property type="entry name" value="Globin"/>
</dbReference>
<dbReference type="InterPro" id="IPR009050">
    <property type="entry name" value="Globin-like_sf"/>
</dbReference>
<dbReference type="InterPro" id="IPR012292">
    <property type="entry name" value="Globin/Proto"/>
</dbReference>
<dbReference type="InterPro" id="IPR023950">
    <property type="entry name" value="Hmp"/>
</dbReference>
<dbReference type="InterPro" id="IPR001433">
    <property type="entry name" value="OxRdtase_FAD/NAD-bd"/>
</dbReference>
<dbReference type="InterPro" id="IPR017938">
    <property type="entry name" value="Riboflavin_synthase-like_b-brl"/>
</dbReference>
<dbReference type="NCBIfam" id="NF009805">
    <property type="entry name" value="PRK13289.1"/>
    <property type="match status" value="1"/>
</dbReference>
<dbReference type="PANTHER" id="PTHR43396">
    <property type="entry name" value="FLAVOHEMOPROTEIN"/>
    <property type="match status" value="1"/>
</dbReference>
<dbReference type="PANTHER" id="PTHR43396:SF3">
    <property type="entry name" value="FLAVOHEMOPROTEIN"/>
    <property type="match status" value="1"/>
</dbReference>
<dbReference type="Pfam" id="PF00970">
    <property type="entry name" value="FAD_binding_6"/>
    <property type="match status" value="1"/>
</dbReference>
<dbReference type="Pfam" id="PF00042">
    <property type="entry name" value="Globin"/>
    <property type="match status" value="1"/>
</dbReference>
<dbReference type="Pfam" id="PF00175">
    <property type="entry name" value="NAD_binding_1"/>
    <property type="match status" value="1"/>
</dbReference>
<dbReference type="PRINTS" id="PR00410">
    <property type="entry name" value="PHEHYDRXLASE"/>
</dbReference>
<dbReference type="SUPFAM" id="SSF52343">
    <property type="entry name" value="Ferredoxin reductase-like, C-terminal NADP-linked domain"/>
    <property type="match status" value="1"/>
</dbReference>
<dbReference type="SUPFAM" id="SSF46458">
    <property type="entry name" value="Globin-like"/>
    <property type="match status" value="1"/>
</dbReference>
<dbReference type="SUPFAM" id="SSF63380">
    <property type="entry name" value="Riboflavin synthase domain-like"/>
    <property type="match status" value="1"/>
</dbReference>
<dbReference type="PROSITE" id="PS51384">
    <property type="entry name" value="FAD_FR"/>
    <property type="match status" value="1"/>
</dbReference>
<dbReference type="PROSITE" id="PS01033">
    <property type="entry name" value="GLOBIN"/>
    <property type="match status" value="1"/>
</dbReference>
<sequence>MLSNAQRALIKATVPLLETGGEALITHFYRTMLGEYPEVRPLFNQAHQASGDQPRALANGVLMYARHIDQLQELGPLVAKVVNKHVSLQVLPEHYPIVGTCLLRAIREVLGEQIATDEVLEAWGAAYQQLADLLIEAEESVYAASAQADGGWRGVRRFRVARKQAESEEITSFYLEPVDGQPLLAFQPGQYIGLRLDIDGEEVRRNYSLSAASNGREYRISVKREAGGRVSNYLHDRVAEGDELDLFPPAGDFVLRDSDKPLVLITAGVGITPALAMLQEALPQARPIRFIHCARHGGVHAFRDWIEDVSAQHEQVEHFFCYSEPRAGDSADAEGLLSREKLADWLPQERDLDAYFLGPRPFMAQVKRHLADLGVPSQQCHYEFFGPAAALDA</sequence>
<accession>Q9I0H4</accession>
<proteinExistence type="inferred from homology"/>
<evidence type="ECO:0000255" key="1">
    <source>
        <dbReference type="HAMAP-Rule" id="MF_01252"/>
    </source>
</evidence>
<evidence type="ECO:0000255" key="2">
    <source>
        <dbReference type="PROSITE-ProRule" id="PRU00238"/>
    </source>
</evidence>
<feature type="chain" id="PRO_0000052439" description="Flavohemoprotein">
    <location>
        <begin position="1"/>
        <end position="393"/>
    </location>
</feature>
<feature type="domain" description="Globin" evidence="2">
    <location>
        <begin position="1"/>
        <end position="139"/>
    </location>
</feature>
<feature type="domain" description="FAD-binding FR-type" evidence="1">
    <location>
        <begin position="153"/>
        <end position="256"/>
    </location>
</feature>
<feature type="region of interest" description="Reductase">
    <location>
        <begin position="150"/>
        <end position="393"/>
    </location>
</feature>
<feature type="active site" description="Charge relay system" evidence="1">
    <location>
        <position position="95"/>
    </location>
</feature>
<feature type="active site" description="Charge relay system" evidence="1">
    <location>
        <position position="138"/>
    </location>
</feature>
<feature type="binding site" description="proximal binding residue" evidence="1">
    <location>
        <position position="85"/>
    </location>
    <ligand>
        <name>heme b</name>
        <dbReference type="ChEBI" id="CHEBI:60344"/>
    </ligand>
    <ligandPart>
        <name>Fe</name>
        <dbReference type="ChEBI" id="CHEBI:18248"/>
    </ligandPart>
</feature>
<feature type="binding site" evidence="1">
    <location>
        <position position="191"/>
    </location>
    <ligand>
        <name>FAD</name>
        <dbReference type="ChEBI" id="CHEBI:57692"/>
    </ligand>
</feature>
<feature type="binding site" evidence="1">
    <location>
        <begin position="205"/>
        <end position="208"/>
    </location>
    <ligand>
        <name>FAD</name>
        <dbReference type="ChEBI" id="CHEBI:57692"/>
    </ligand>
</feature>
<feature type="binding site" evidence="1">
    <location>
        <begin position="268"/>
        <end position="273"/>
    </location>
    <ligand>
        <name>NADP(+)</name>
        <dbReference type="ChEBI" id="CHEBI:58349"/>
    </ligand>
</feature>
<feature type="binding site" evidence="1">
    <location>
        <begin position="384"/>
        <end position="387"/>
    </location>
    <ligand>
        <name>FAD</name>
        <dbReference type="ChEBI" id="CHEBI:57692"/>
    </ligand>
</feature>
<feature type="site" description="Involved in heme-bound ligand stabilization and O-O bond activation" evidence="1">
    <location>
        <position position="29"/>
    </location>
</feature>
<feature type="site" description="Influences the redox potential of the prosthetic heme and FAD groups" evidence="1">
    <location>
        <position position="84"/>
    </location>
</feature>
<feature type="site" description="Influences the redox potential of the prosthetic heme and FAD groups" evidence="1">
    <location>
        <position position="383"/>
    </location>
</feature>
<gene>
    <name evidence="1" type="primary">hmp</name>
    <name type="synonym">fhp</name>
    <name type="ordered locus">PA2664</name>
</gene>
<keyword id="KW-0216">Detoxification</keyword>
<keyword id="KW-0274">FAD</keyword>
<keyword id="KW-0285">Flavoprotein</keyword>
<keyword id="KW-0349">Heme</keyword>
<keyword id="KW-0408">Iron</keyword>
<keyword id="KW-0479">Metal-binding</keyword>
<keyword id="KW-0520">NAD</keyword>
<keyword id="KW-0521">NADP</keyword>
<keyword id="KW-0560">Oxidoreductase</keyword>
<keyword id="KW-0561">Oxygen transport</keyword>
<keyword id="KW-1185">Reference proteome</keyword>
<keyword id="KW-0813">Transport</keyword>
<comment type="function">
    <text evidence="1">Is involved in NO detoxification in an aerobic process, termed nitric oxide dioxygenase (NOD) reaction that utilizes O(2) and NAD(P)H to convert NO to nitrate, which protects the bacterium from various noxious nitrogen compounds. Therefore, plays a central role in the inducible response to nitrosative stress.</text>
</comment>
<comment type="catalytic activity">
    <reaction evidence="1">
        <text>2 nitric oxide + NADPH + 2 O2 = 2 nitrate + NADP(+) + H(+)</text>
        <dbReference type="Rhea" id="RHEA:19465"/>
        <dbReference type="ChEBI" id="CHEBI:15378"/>
        <dbReference type="ChEBI" id="CHEBI:15379"/>
        <dbReference type="ChEBI" id="CHEBI:16480"/>
        <dbReference type="ChEBI" id="CHEBI:17632"/>
        <dbReference type="ChEBI" id="CHEBI:57783"/>
        <dbReference type="ChEBI" id="CHEBI:58349"/>
        <dbReference type="EC" id="1.14.12.17"/>
    </reaction>
</comment>
<comment type="catalytic activity">
    <reaction evidence="1">
        <text>2 nitric oxide + NADH + 2 O2 = 2 nitrate + NAD(+) + H(+)</text>
        <dbReference type="Rhea" id="RHEA:19469"/>
        <dbReference type="ChEBI" id="CHEBI:15378"/>
        <dbReference type="ChEBI" id="CHEBI:15379"/>
        <dbReference type="ChEBI" id="CHEBI:16480"/>
        <dbReference type="ChEBI" id="CHEBI:17632"/>
        <dbReference type="ChEBI" id="CHEBI:57540"/>
        <dbReference type="ChEBI" id="CHEBI:57945"/>
        <dbReference type="EC" id="1.14.12.17"/>
    </reaction>
</comment>
<comment type="cofactor">
    <cofactor evidence="1">
        <name>heme b</name>
        <dbReference type="ChEBI" id="CHEBI:60344"/>
    </cofactor>
    <text evidence="1">Binds 1 heme b (iron(II)-protoporphyrin IX) group per subunit.</text>
</comment>
<comment type="cofactor">
    <cofactor evidence="1">
        <name>FAD</name>
        <dbReference type="ChEBI" id="CHEBI:57692"/>
    </cofactor>
    <text evidence="1">Binds 1 FAD per subunit.</text>
</comment>
<comment type="domain">
    <text>Consists of two distinct domains; an N-terminal heme-containing oxygen-binding domain and a C-terminal reductase domain with binding sites for FAD and NAD(P)H.</text>
</comment>
<comment type="similarity">
    <text evidence="1">Belongs to the globin family. Two-domain flavohemoproteins subfamily.</text>
</comment>
<comment type="similarity">
    <text evidence="1">In the C-terminal section; belongs to the flavoprotein pyridine nucleotide cytochrome reductase family.</text>
</comment>
<protein>
    <recommendedName>
        <fullName evidence="1">Flavohemoprotein</fullName>
    </recommendedName>
    <alternativeName>
        <fullName evidence="1">Flavohemoglobin</fullName>
    </alternativeName>
    <alternativeName>
        <fullName evidence="1">Hemoglobin-like protein</fullName>
    </alternativeName>
    <alternativeName>
        <fullName evidence="1">Nitric oxide dioxygenase</fullName>
        <shortName evidence="1">NO oxygenase</shortName>
        <shortName evidence="1">NOD</shortName>
        <ecNumber evidence="1">1.14.12.17</ecNumber>
    </alternativeName>
</protein>
<reference key="1">
    <citation type="journal article" date="2000" name="Nature">
        <title>Complete genome sequence of Pseudomonas aeruginosa PAO1, an opportunistic pathogen.</title>
        <authorList>
            <person name="Stover C.K."/>
            <person name="Pham X.-Q.T."/>
            <person name="Erwin A.L."/>
            <person name="Mizoguchi S.D."/>
            <person name="Warrener P."/>
            <person name="Hickey M.J."/>
            <person name="Brinkman F.S.L."/>
            <person name="Hufnagle W.O."/>
            <person name="Kowalik D.J."/>
            <person name="Lagrou M."/>
            <person name="Garber R.L."/>
            <person name="Goltry L."/>
            <person name="Tolentino E."/>
            <person name="Westbrock-Wadman S."/>
            <person name="Yuan Y."/>
            <person name="Brody L.L."/>
            <person name="Coulter S.N."/>
            <person name="Folger K.R."/>
            <person name="Kas A."/>
            <person name="Larbig K."/>
            <person name="Lim R.M."/>
            <person name="Smith K.A."/>
            <person name="Spencer D.H."/>
            <person name="Wong G.K.-S."/>
            <person name="Wu Z."/>
            <person name="Paulsen I.T."/>
            <person name="Reizer J."/>
            <person name="Saier M.H. Jr."/>
            <person name="Hancock R.E.W."/>
            <person name="Lory S."/>
            <person name="Olson M.V."/>
        </authorList>
    </citation>
    <scope>NUCLEOTIDE SEQUENCE [LARGE SCALE GENOMIC DNA]</scope>
    <source>
        <strain>ATCC 15692 / DSM 22644 / CIP 104116 / JCM 14847 / LMG 12228 / 1C / PRS 101 / PAO1</strain>
    </source>
</reference>
<name>HMP_PSEAE</name>